<dbReference type="EC" id="7.1.1.-" evidence="1"/>
<dbReference type="EMBL" id="CP000783">
    <property type="protein sequence ID" value="ABU76203.1"/>
    <property type="molecule type" value="Genomic_DNA"/>
</dbReference>
<dbReference type="RefSeq" id="WP_004388648.1">
    <property type="nucleotide sequence ID" value="NC_009778.1"/>
</dbReference>
<dbReference type="SMR" id="A7MH23"/>
<dbReference type="KEGG" id="esa:ESA_00933"/>
<dbReference type="HOGENOM" id="CLU_055737_7_3_6"/>
<dbReference type="Proteomes" id="UP000000260">
    <property type="component" value="Chromosome"/>
</dbReference>
<dbReference type="GO" id="GO:0005886">
    <property type="term" value="C:plasma membrane"/>
    <property type="evidence" value="ECO:0007669"/>
    <property type="project" value="UniProtKB-SubCell"/>
</dbReference>
<dbReference type="GO" id="GO:0045271">
    <property type="term" value="C:respiratory chain complex I"/>
    <property type="evidence" value="ECO:0007669"/>
    <property type="project" value="TreeGrafter"/>
</dbReference>
<dbReference type="GO" id="GO:0051539">
    <property type="term" value="F:4 iron, 4 sulfur cluster binding"/>
    <property type="evidence" value="ECO:0007669"/>
    <property type="project" value="UniProtKB-KW"/>
</dbReference>
<dbReference type="GO" id="GO:0005506">
    <property type="term" value="F:iron ion binding"/>
    <property type="evidence" value="ECO:0007669"/>
    <property type="project" value="UniProtKB-UniRule"/>
</dbReference>
<dbReference type="GO" id="GO:0008137">
    <property type="term" value="F:NADH dehydrogenase (ubiquinone) activity"/>
    <property type="evidence" value="ECO:0007669"/>
    <property type="project" value="InterPro"/>
</dbReference>
<dbReference type="GO" id="GO:0050136">
    <property type="term" value="F:NADH:ubiquinone reductase (non-electrogenic) activity"/>
    <property type="evidence" value="ECO:0007669"/>
    <property type="project" value="UniProtKB-UniRule"/>
</dbReference>
<dbReference type="GO" id="GO:0048038">
    <property type="term" value="F:quinone binding"/>
    <property type="evidence" value="ECO:0007669"/>
    <property type="project" value="UniProtKB-KW"/>
</dbReference>
<dbReference type="GO" id="GO:0009060">
    <property type="term" value="P:aerobic respiration"/>
    <property type="evidence" value="ECO:0007669"/>
    <property type="project" value="TreeGrafter"/>
</dbReference>
<dbReference type="GO" id="GO:0015990">
    <property type="term" value="P:electron transport coupled proton transport"/>
    <property type="evidence" value="ECO:0007669"/>
    <property type="project" value="TreeGrafter"/>
</dbReference>
<dbReference type="FunFam" id="3.40.50.12280:FF:000002">
    <property type="entry name" value="NADH-quinone oxidoreductase subunit B"/>
    <property type="match status" value="1"/>
</dbReference>
<dbReference type="Gene3D" id="3.40.50.12280">
    <property type="match status" value="1"/>
</dbReference>
<dbReference type="HAMAP" id="MF_01356">
    <property type="entry name" value="NDH1_NuoB"/>
    <property type="match status" value="1"/>
</dbReference>
<dbReference type="InterPro" id="IPR006137">
    <property type="entry name" value="NADH_UbQ_OxRdtase-like_20kDa"/>
</dbReference>
<dbReference type="InterPro" id="IPR006138">
    <property type="entry name" value="NADH_UQ_OxRdtase_20Kd_su"/>
</dbReference>
<dbReference type="NCBIfam" id="TIGR01957">
    <property type="entry name" value="nuoB_fam"/>
    <property type="match status" value="1"/>
</dbReference>
<dbReference type="NCBIfam" id="NF005012">
    <property type="entry name" value="PRK06411.1"/>
    <property type="match status" value="1"/>
</dbReference>
<dbReference type="PANTHER" id="PTHR11995">
    <property type="entry name" value="NADH DEHYDROGENASE"/>
    <property type="match status" value="1"/>
</dbReference>
<dbReference type="PANTHER" id="PTHR11995:SF14">
    <property type="entry name" value="NADH DEHYDROGENASE [UBIQUINONE] IRON-SULFUR PROTEIN 7, MITOCHONDRIAL"/>
    <property type="match status" value="1"/>
</dbReference>
<dbReference type="Pfam" id="PF01058">
    <property type="entry name" value="Oxidored_q6"/>
    <property type="match status" value="1"/>
</dbReference>
<dbReference type="SUPFAM" id="SSF56770">
    <property type="entry name" value="HydA/Nqo6-like"/>
    <property type="match status" value="1"/>
</dbReference>
<dbReference type="PROSITE" id="PS01150">
    <property type="entry name" value="COMPLEX1_20K"/>
    <property type="match status" value="1"/>
</dbReference>
<comment type="function">
    <text evidence="1">NDH-1 shuttles electrons from NADH, via FMN and iron-sulfur (Fe-S) centers, to quinones in the respiratory chain. The immediate electron acceptor for the enzyme in this species is believed to be ubiquinone. Couples the redox reaction to proton translocation (for every two electrons transferred, four hydrogen ions are translocated across the cytoplasmic membrane), and thus conserves the redox energy in a proton gradient.</text>
</comment>
<comment type="catalytic activity">
    <reaction evidence="1">
        <text>a quinone + NADH + 5 H(+)(in) = a quinol + NAD(+) + 4 H(+)(out)</text>
        <dbReference type="Rhea" id="RHEA:57888"/>
        <dbReference type="ChEBI" id="CHEBI:15378"/>
        <dbReference type="ChEBI" id="CHEBI:24646"/>
        <dbReference type="ChEBI" id="CHEBI:57540"/>
        <dbReference type="ChEBI" id="CHEBI:57945"/>
        <dbReference type="ChEBI" id="CHEBI:132124"/>
    </reaction>
</comment>
<comment type="cofactor">
    <cofactor evidence="1">
        <name>[4Fe-4S] cluster</name>
        <dbReference type="ChEBI" id="CHEBI:49883"/>
    </cofactor>
    <text evidence="1">Binds 1 [4Fe-4S] cluster.</text>
</comment>
<comment type="subunit">
    <text evidence="1">NDH-1 is composed of 13 different subunits. Subunits NuoB, CD, E, F, and G constitute the peripheral sector of the complex.</text>
</comment>
<comment type="subcellular location">
    <subcellularLocation>
        <location evidence="1">Cell inner membrane</location>
        <topology evidence="1">Peripheral membrane protein</topology>
        <orientation evidence="1">Cytoplasmic side</orientation>
    </subcellularLocation>
</comment>
<comment type="similarity">
    <text evidence="1">Belongs to the complex I 20 kDa subunit family.</text>
</comment>
<name>NUOB_CROS8</name>
<gene>
    <name evidence="1" type="primary">nuoB</name>
    <name type="ordered locus">ESA_00933</name>
</gene>
<evidence type="ECO:0000255" key="1">
    <source>
        <dbReference type="HAMAP-Rule" id="MF_01356"/>
    </source>
</evidence>
<keyword id="KW-0004">4Fe-4S</keyword>
<keyword id="KW-0997">Cell inner membrane</keyword>
<keyword id="KW-1003">Cell membrane</keyword>
<keyword id="KW-0408">Iron</keyword>
<keyword id="KW-0411">Iron-sulfur</keyword>
<keyword id="KW-0472">Membrane</keyword>
<keyword id="KW-0479">Metal-binding</keyword>
<keyword id="KW-0520">NAD</keyword>
<keyword id="KW-0874">Quinone</keyword>
<keyword id="KW-1185">Reference proteome</keyword>
<keyword id="KW-1278">Translocase</keyword>
<keyword id="KW-0813">Transport</keyword>
<keyword id="KW-0830">Ubiquinone</keyword>
<protein>
    <recommendedName>
        <fullName evidence="1">NADH-quinone oxidoreductase subunit B</fullName>
        <ecNumber evidence="1">7.1.1.-</ecNumber>
    </recommendedName>
    <alternativeName>
        <fullName evidence="1">NADH dehydrogenase I subunit B</fullName>
    </alternativeName>
    <alternativeName>
        <fullName evidence="1">NDH-1 subunit B</fullName>
    </alternativeName>
</protein>
<feature type="chain" id="PRO_0000376202" description="NADH-quinone oxidoreductase subunit B">
    <location>
        <begin position="1"/>
        <end position="224"/>
    </location>
</feature>
<feature type="binding site" evidence="1">
    <location>
        <position position="67"/>
    </location>
    <ligand>
        <name>[4Fe-4S] cluster</name>
        <dbReference type="ChEBI" id="CHEBI:49883"/>
    </ligand>
</feature>
<feature type="binding site" evidence="1">
    <location>
        <position position="68"/>
    </location>
    <ligand>
        <name>[4Fe-4S] cluster</name>
        <dbReference type="ChEBI" id="CHEBI:49883"/>
    </ligand>
</feature>
<feature type="binding site" evidence="1">
    <location>
        <position position="133"/>
    </location>
    <ligand>
        <name>[4Fe-4S] cluster</name>
        <dbReference type="ChEBI" id="CHEBI:49883"/>
    </ligand>
</feature>
<feature type="binding site" evidence="1">
    <location>
        <position position="162"/>
    </location>
    <ligand>
        <name>[4Fe-4S] cluster</name>
        <dbReference type="ChEBI" id="CHEBI:49883"/>
    </ligand>
</feature>
<organism>
    <name type="scientific">Cronobacter sakazakii (strain ATCC BAA-894)</name>
    <name type="common">Enterobacter sakazakii</name>
    <dbReference type="NCBI Taxonomy" id="290339"/>
    <lineage>
        <taxon>Bacteria</taxon>
        <taxon>Pseudomonadati</taxon>
        <taxon>Pseudomonadota</taxon>
        <taxon>Gammaproteobacteria</taxon>
        <taxon>Enterobacterales</taxon>
        <taxon>Enterobacteriaceae</taxon>
        <taxon>Cronobacter</taxon>
    </lineage>
</organism>
<sequence length="224" mass="25606">MDYTLTRIDPDGENDRYPLQKQEIVTDPLEQHVHRSVYMGKLEHALHDMVNWGRKNSLWPYNFGLSCCYVEMVTSFTAVHDVARFGAEVLRASPRQADFMVVAGTPFTKMAPVIQRLYDQMLEPKWVISMGACANSGGMYDIYSVVQGVDKFLPVDVYIPGCPPRPEAYMQALMLLQESIGKERRPLSWVVGDQGVYRANMQSERERKRGERIAVTNLRTPDEI</sequence>
<accession>A7MH23</accession>
<reference key="1">
    <citation type="journal article" date="2010" name="PLoS ONE">
        <title>Genome sequence of Cronobacter sakazakii BAA-894 and comparative genomic hybridization analysis with other Cronobacter species.</title>
        <authorList>
            <person name="Kucerova E."/>
            <person name="Clifton S.W."/>
            <person name="Xia X.Q."/>
            <person name="Long F."/>
            <person name="Porwollik S."/>
            <person name="Fulton L."/>
            <person name="Fronick C."/>
            <person name="Minx P."/>
            <person name="Kyung K."/>
            <person name="Warren W."/>
            <person name="Fulton R."/>
            <person name="Feng D."/>
            <person name="Wollam A."/>
            <person name="Shah N."/>
            <person name="Bhonagiri V."/>
            <person name="Nash W.E."/>
            <person name="Hallsworth-Pepin K."/>
            <person name="Wilson R.K."/>
            <person name="McClelland M."/>
            <person name="Forsythe S.J."/>
        </authorList>
    </citation>
    <scope>NUCLEOTIDE SEQUENCE [LARGE SCALE GENOMIC DNA]</scope>
    <source>
        <strain>ATCC BAA-894</strain>
    </source>
</reference>
<proteinExistence type="inferred from homology"/>